<gene>
    <name type="primary">carC</name>
    <name type="synonym">crtIb</name>
</gene>
<evidence type="ECO:0000255" key="1"/>
<evidence type="ECO:0000269" key="2">
    <source>
    </source>
</evidence>
<evidence type="ECO:0000305" key="3"/>
<organism>
    <name type="scientific">Myxococcus xanthus</name>
    <dbReference type="NCBI Taxonomy" id="34"/>
    <lineage>
        <taxon>Bacteria</taxon>
        <taxon>Pseudomonadati</taxon>
        <taxon>Myxococcota</taxon>
        <taxon>Myxococcia</taxon>
        <taxon>Myxococcales</taxon>
        <taxon>Cystobacterineae</taxon>
        <taxon>Myxococcaceae</taxon>
        <taxon>Myxococcus</taxon>
    </lineage>
</organism>
<protein>
    <recommendedName>
        <fullName>All-trans-zeta-carotene desaturase</fullName>
        <ecNumber>1.3.99.26</ecNumber>
    </recommendedName>
    <alternativeName>
        <fullName>Phytoene dehydrogenase</fullName>
    </alternativeName>
    <alternativeName>
        <fullName>Phytoene desaturase</fullName>
    </alternativeName>
</protein>
<feature type="chain" id="PRO_0000067688" description="All-trans-zeta-carotene desaturase">
    <location>
        <begin position="1"/>
        <end position="529"/>
    </location>
</feature>
<feature type="binding site" evidence="1">
    <location>
        <begin position="12"/>
        <end position="45"/>
    </location>
    <ligand>
        <name>FAD</name>
        <dbReference type="ChEBI" id="CHEBI:57692"/>
    </ligand>
</feature>
<dbReference type="EC" id="1.3.99.26"/>
<dbReference type="EMBL" id="M94727">
    <property type="protein sequence ID" value="AAA25390.1"/>
    <property type="molecule type" value="Genomic_DNA"/>
</dbReference>
<dbReference type="PIR" id="S35306">
    <property type="entry name" value="S35306"/>
</dbReference>
<dbReference type="SMR" id="Q02861"/>
<dbReference type="BioCyc" id="MetaCyc:MONOMER-16371"/>
<dbReference type="UniPathway" id="UPA00803"/>
<dbReference type="GO" id="GO:0016627">
    <property type="term" value="F:oxidoreductase activity, acting on the CH-CH group of donors"/>
    <property type="evidence" value="ECO:0000314"/>
    <property type="project" value="UniProtKB"/>
</dbReference>
<dbReference type="GO" id="GO:0016117">
    <property type="term" value="P:carotenoid biosynthetic process"/>
    <property type="evidence" value="ECO:0000314"/>
    <property type="project" value="UniProtKB"/>
</dbReference>
<dbReference type="FunFam" id="3.50.50.60:FF:000413">
    <property type="entry name" value="Phytoene desaturase (lycopene-forming)"/>
    <property type="match status" value="1"/>
</dbReference>
<dbReference type="Gene3D" id="3.50.50.60">
    <property type="entry name" value="FAD/NAD(P)-binding domain"/>
    <property type="match status" value="2"/>
</dbReference>
<dbReference type="InterPro" id="IPR002937">
    <property type="entry name" value="Amino_oxidase"/>
</dbReference>
<dbReference type="InterPro" id="IPR014105">
    <property type="entry name" value="Carotenoid/retinoid_OxRdtase"/>
</dbReference>
<dbReference type="InterPro" id="IPR036188">
    <property type="entry name" value="FAD/NAD-bd_sf"/>
</dbReference>
<dbReference type="InterPro" id="IPR008150">
    <property type="entry name" value="Phytoene_DH_bac_CS"/>
</dbReference>
<dbReference type="NCBIfam" id="TIGR02734">
    <property type="entry name" value="crtI_fam"/>
    <property type="match status" value="1"/>
</dbReference>
<dbReference type="PANTHER" id="PTHR43734">
    <property type="entry name" value="PHYTOENE DESATURASE"/>
    <property type="match status" value="1"/>
</dbReference>
<dbReference type="PANTHER" id="PTHR43734:SF1">
    <property type="entry name" value="PHYTOENE DESATURASE"/>
    <property type="match status" value="1"/>
</dbReference>
<dbReference type="Pfam" id="PF01593">
    <property type="entry name" value="Amino_oxidase"/>
    <property type="match status" value="1"/>
</dbReference>
<dbReference type="PRINTS" id="PR00419">
    <property type="entry name" value="ADXRDTASE"/>
</dbReference>
<dbReference type="SUPFAM" id="SSF51905">
    <property type="entry name" value="FAD/NAD(P)-binding domain"/>
    <property type="match status" value="1"/>
</dbReference>
<dbReference type="PROSITE" id="PS00982">
    <property type="entry name" value="PHYTOENE_DH"/>
    <property type="match status" value="1"/>
</dbReference>
<proteinExistence type="evidence at protein level"/>
<accession>Q02861</accession>
<reference key="1">
    <citation type="journal article" date="1993" name="EMBO J.">
        <title>Growth phase dependence of the activation of a bacterial gene for carotenoid synthesis by blue light.</title>
        <authorList>
            <person name="Fontes M."/>
            <person name="Ruiz-Vazquez R.M."/>
            <person name="Murillo F.J."/>
        </authorList>
    </citation>
    <scope>NUCLEOTIDE SEQUENCE [GENOMIC DNA]</scope>
    <source>
        <strain>MR403</strain>
    </source>
</reference>
<reference key="2">
    <citation type="journal article" date="2007" name="FEBS J.">
        <title>Cooperation of two carotene desaturases in the production of lycopene in Myxococcus xanthus.</title>
        <authorList>
            <person name="Iniesta A.A."/>
            <person name="Cervantes M."/>
            <person name="Murillo F.J."/>
        </authorList>
    </citation>
    <scope>FUNCTION</scope>
    <scope>PATHWAY</scope>
    <scope>CATALYTIC ACTIVITY</scope>
</reference>
<name>CRTI_MYXXA</name>
<comment type="function">
    <text evidence="2">Dehydrogenates carotenes in the trans conformation: converts all-trans-zeta-carotene into all-trans-lycopene, one of the last dehydrogenation steps of lycopene biosynthesis.</text>
</comment>
<comment type="catalytic activity">
    <reaction evidence="2">
        <text>all-trans-zeta-carotene + 2 A = all-trans-lycopene + 2 AH2</text>
        <dbReference type="Rhea" id="RHEA:30619"/>
        <dbReference type="ChEBI" id="CHEBI:13193"/>
        <dbReference type="ChEBI" id="CHEBI:15948"/>
        <dbReference type="ChEBI" id="CHEBI:17499"/>
        <dbReference type="ChEBI" id="CHEBI:28068"/>
        <dbReference type="EC" id="1.3.99.26"/>
    </reaction>
</comment>
<comment type="cofactor">
    <cofactor evidence="3">
        <name>FAD</name>
        <dbReference type="ChEBI" id="CHEBI:57692"/>
    </cofactor>
</comment>
<comment type="pathway">
    <text evidence="2">Carotenoid biosynthesis; lycopene biosynthesis.</text>
</comment>
<comment type="induction">
    <text>By blue light.</text>
</comment>
<comment type="similarity">
    <text evidence="3">Belongs to the carotenoid/retinoid oxidoreductase family.</text>
</comment>
<keyword id="KW-0125">Carotenoid biosynthesis</keyword>
<keyword id="KW-0274">FAD</keyword>
<keyword id="KW-0285">Flavoprotein</keyword>
<keyword id="KW-0520">NAD</keyword>
<keyword id="KW-0560">Oxidoreductase</keyword>
<sequence>MASEGGSVRHVIVVGAGPGGLSAAINLAGQGFRVTVVEKDAVPGGRMKGLTLGASGEYAVDTGPSILQLPGVLEQIFRRAARRLEDYVKLLPLDVNTRVHFWDGTHLDTTRHLDRMEAELAKFGPRQASALRQWMEDGREKYGIAYQKFICTSADNLGYYAPWRLAPTLRFKPWQTLYRQLDGFFHDDRVTYALAYPSKYLGLHPTTCSSVFSVIPFLELAFGVWHVEGGFRELSRGMMRCARDLGATFRMGTPVEKVRVDAGRAVGVKLVGGEVLDADAVVVNADLAYAARSLIPAEAREGSRLTDAALERAKYSCSTFMAYYGLDTVYADLPHHLIYLSESARRTDRDALEDRHVDLEDPPFYVCNPGVTDPSGAPAGHSTLYVLVPTPNTGRPVDWVKTEQALRERIPAMLEKVGLKGVREHIREERYFTAETWRDDFNVFRGAVFNLSHTWLQLGPLRPKVKNRDIEGLYFVGGGTHPGSGLLTIMESANIAADYLTREAGKGPLPGWPYVPPLEPESPVQARAG</sequence>